<name>NUOB_ORITB</name>
<evidence type="ECO:0000250" key="1"/>
<evidence type="ECO:0000255" key="2">
    <source>
        <dbReference type="HAMAP-Rule" id="MF_01356"/>
    </source>
</evidence>
<dbReference type="EC" id="7.1.1.-" evidence="2"/>
<dbReference type="EMBL" id="AM494475">
    <property type="protein sequence ID" value="CAM80723.1"/>
    <property type="molecule type" value="Genomic_DNA"/>
</dbReference>
<dbReference type="RefSeq" id="WP_011944977.1">
    <property type="nucleotide sequence ID" value="NC_009488.1"/>
</dbReference>
<dbReference type="SMR" id="A5CES0"/>
<dbReference type="KEGG" id="ots:OTBS_1628"/>
<dbReference type="eggNOG" id="COG0377">
    <property type="taxonomic scope" value="Bacteria"/>
</dbReference>
<dbReference type="HOGENOM" id="CLU_055737_7_0_5"/>
<dbReference type="Proteomes" id="UP000001565">
    <property type="component" value="Chromosome"/>
</dbReference>
<dbReference type="GO" id="GO:0005886">
    <property type="term" value="C:plasma membrane"/>
    <property type="evidence" value="ECO:0007669"/>
    <property type="project" value="UniProtKB-SubCell"/>
</dbReference>
<dbReference type="GO" id="GO:0045271">
    <property type="term" value="C:respiratory chain complex I"/>
    <property type="evidence" value="ECO:0007669"/>
    <property type="project" value="TreeGrafter"/>
</dbReference>
<dbReference type="GO" id="GO:0051539">
    <property type="term" value="F:4 iron, 4 sulfur cluster binding"/>
    <property type="evidence" value="ECO:0007669"/>
    <property type="project" value="UniProtKB-KW"/>
</dbReference>
<dbReference type="GO" id="GO:0005506">
    <property type="term" value="F:iron ion binding"/>
    <property type="evidence" value="ECO:0007669"/>
    <property type="project" value="UniProtKB-UniRule"/>
</dbReference>
<dbReference type="GO" id="GO:0008137">
    <property type="term" value="F:NADH dehydrogenase (ubiquinone) activity"/>
    <property type="evidence" value="ECO:0007669"/>
    <property type="project" value="InterPro"/>
</dbReference>
<dbReference type="GO" id="GO:0050136">
    <property type="term" value="F:NADH:ubiquinone reductase (non-electrogenic) activity"/>
    <property type="evidence" value="ECO:0007669"/>
    <property type="project" value="UniProtKB-UniRule"/>
</dbReference>
<dbReference type="GO" id="GO:0048038">
    <property type="term" value="F:quinone binding"/>
    <property type="evidence" value="ECO:0007669"/>
    <property type="project" value="UniProtKB-KW"/>
</dbReference>
<dbReference type="GO" id="GO:0009060">
    <property type="term" value="P:aerobic respiration"/>
    <property type="evidence" value="ECO:0007669"/>
    <property type="project" value="TreeGrafter"/>
</dbReference>
<dbReference type="GO" id="GO:0015990">
    <property type="term" value="P:electron transport coupled proton transport"/>
    <property type="evidence" value="ECO:0007669"/>
    <property type="project" value="TreeGrafter"/>
</dbReference>
<dbReference type="FunFam" id="3.40.50.12280:FF:000001">
    <property type="entry name" value="NADH-quinone oxidoreductase subunit B 2"/>
    <property type="match status" value="1"/>
</dbReference>
<dbReference type="Gene3D" id="3.40.50.12280">
    <property type="match status" value="1"/>
</dbReference>
<dbReference type="HAMAP" id="MF_01356">
    <property type="entry name" value="NDH1_NuoB"/>
    <property type="match status" value="1"/>
</dbReference>
<dbReference type="InterPro" id="IPR006137">
    <property type="entry name" value="NADH_UbQ_OxRdtase-like_20kDa"/>
</dbReference>
<dbReference type="InterPro" id="IPR006138">
    <property type="entry name" value="NADH_UQ_OxRdtase_20Kd_su"/>
</dbReference>
<dbReference type="NCBIfam" id="TIGR01957">
    <property type="entry name" value="nuoB_fam"/>
    <property type="match status" value="1"/>
</dbReference>
<dbReference type="NCBIfam" id="NF005012">
    <property type="entry name" value="PRK06411.1"/>
    <property type="match status" value="1"/>
</dbReference>
<dbReference type="PANTHER" id="PTHR11995">
    <property type="entry name" value="NADH DEHYDROGENASE"/>
    <property type="match status" value="1"/>
</dbReference>
<dbReference type="PANTHER" id="PTHR11995:SF14">
    <property type="entry name" value="NADH DEHYDROGENASE [UBIQUINONE] IRON-SULFUR PROTEIN 7, MITOCHONDRIAL"/>
    <property type="match status" value="1"/>
</dbReference>
<dbReference type="Pfam" id="PF01058">
    <property type="entry name" value="Oxidored_q6"/>
    <property type="match status" value="1"/>
</dbReference>
<dbReference type="SUPFAM" id="SSF56770">
    <property type="entry name" value="HydA/Nqo6-like"/>
    <property type="match status" value="1"/>
</dbReference>
<dbReference type="PROSITE" id="PS01150">
    <property type="entry name" value="COMPLEX1_20K"/>
    <property type="match status" value="1"/>
</dbReference>
<proteinExistence type="inferred from homology"/>
<reference key="1">
    <citation type="journal article" date="2007" name="Proc. Natl. Acad. Sci. U.S.A.">
        <title>The Orientia tsutsugamushi genome reveals massive proliferation of conjugative type IV secretion system and host-cell interaction genes.</title>
        <authorList>
            <person name="Cho N.-H."/>
            <person name="Kim H.-R."/>
            <person name="Lee J.-H."/>
            <person name="Kim S.-Y."/>
            <person name="Kim J."/>
            <person name="Cha S."/>
            <person name="Kim S.-Y."/>
            <person name="Darby A.C."/>
            <person name="Fuxelius H.-H."/>
            <person name="Yin J."/>
            <person name="Kim J.H."/>
            <person name="Kim J."/>
            <person name="Lee S.J."/>
            <person name="Koh Y.-S."/>
            <person name="Jang W.-J."/>
            <person name="Park K.-H."/>
            <person name="Andersson S.G.E."/>
            <person name="Choi M.-S."/>
            <person name="Kim I.-S."/>
        </authorList>
    </citation>
    <scope>NUCLEOTIDE SEQUENCE [LARGE SCALE GENOMIC DNA]</scope>
    <source>
        <strain>Boryong</strain>
    </source>
</reference>
<comment type="function">
    <text evidence="1">NDH-1 shuttles electrons from NADH, via FMN and iron-sulfur (Fe-S) centers, to quinones in the respiratory chain. Couples the redox reaction to proton translocation (for every two electrons transferred, four hydrogen ions are translocated across the cytoplasmic membrane), and thus conserves the redox energy in a proton gradient (By similarity).</text>
</comment>
<comment type="catalytic activity">
    <reaction evidence="2">
        <text>a quinone + NADH + 5 H(+)(in) = a quinol + NAD(+) + 4 H(+)(out)</text>
        <dbReference type="Rhea" id="RHEA:57888"/>
        <dbReference type="ChEBI" id="CHEBI:15378"/>
        <dbReference type="ChEBI" id="CHEBI:24646"/>
        <dbReference type="ChEBI" id="CHEBI:57540"/>
        <dbReference type="ChEBI" id="CHEBI:57945"/>
        <dbReference type="ChEBI" id="CHEBI:132124"/>
    </reaction>
</comment>
<comment type="cofactor">
    <cofactor evidence="2">
        <name>[4Fe-4S] cluster</name>
        <dbReference type="ChEBI" id="CHEBI:49883"/>
    </cofactor>
    <text evidence="2">Binds 1 [4Fe-4S] cluster.</text>
</comment>
<comment type="subunit">
    <text evidence="2">NDH-1 is composed of 14 different subunits. Subunits NuoB, C, D, E, F, and G constitute the peripheral sector of the complex.</text>
</comment>
<comment type="subcellular location">
    <subcellularLocation>
        <location evidence="2">Cell inner membrane</location>
        <topology evidence="2">Peripheral membrane protein</topology>
        <orientation evidence="2">Cytoplasmic side</orientation>
    </subcellularLocation>
</comment>
<comment type="similarity">
    <text evidence="2">Belongs to the complex I 20 kDa subunit family.</text>
</comment>
<gene>
    <name evidence="2" type="primary">nuoB</name>
    <name type="ordered locus">OTBS_1628</name>
</gene>
<protein>
    <recommendedName>
        <fullName evidence="2">NADH-quinone oxidoreductase subunit B</fullName>
        <ecNumber evidence="2">7.1.1.-</ecNumber>
    </recommendedName>
    <alternativeName>
        <fullName evidence="2">NADH dehydrogenase I subunit B</fullName>
    </alternativeName>
    <alternativeName>
        <fullName evidence="2">NDH-1 subunit B</fullName>
    </alternativeName>
</protein>
<feature type="chain" id="PRO_0000358439" description="NADH-quinone oxidoreductase subunit B">
    <location>
        <begin position="1"/>
        <end position="171"/>
    </location>
</feature>
<feature type="binding site" evidence="2">
    <location>
        <position position="48"/>
    </location>
    <ligand>
        <name>[4Fe-4S] cluster</name>
        <dbReference type="ChEBI" id="CHEBI:49883"/>
    </ligand>
</feature>
<feature type="binding site" evidence="2">
    <location>
        <position position="49"/>
    </location>
    <ligand>
        <name>[4Fe-4S] cluster</name>
        <dbReference type="ChEBI" id="CHEBI:49883"/>
    </ligand>
</feature>
<feature type="binding site" evidence="2">
    <location>
        <position position="113"/>
    </location>
    <ligand>
        <name>[4Fe-4S] cluster</name>
        <dbReference type="ChEBI" id="CHEBI:49883"/>
    </ligand>
</feature>
<feature type="binding site" evidence="2">
    <location>
        <position position="143"/>
    </location>
    <ligand>
        <name>[4Fe-4S] cluster</name>
        <dbReference type="ChEBI" id="CHEBI:49883"/>
    </ligand>
</feature>
<organism>
    <name type="scientific">Orientia tsutsugamushi (strain Boryong)</name>
    <name type="common">Rickettsia tsutsugamushi</name>
    <dbReference type="NCBI Taxonomy" id="357244"/>
    <lineage>
        <taxon>Bacteria</taxon>
        <taxon>Pseudomonadati</taxon>
        <taxon>Pseudomonadota</taxon>
        <taxon>Alphaproteobacteria</taxon>
        <taxon>Rickettsiales</taxon>
        <taxon>Rickettsiaceae</taxon>
        <taxon>Rickettsieae</taxon>
        <taxon>Orientia</taxon>
    </lineage>
</organism>
<accession>A5CES0</accession>
<keyword id="KW-0004">4Fe-4S</keyword>
<keyword id="KW-0997">Cell inner membrane</keyword>
<keyword id="KW-1003">Cell membrane</keyword>
<keyword id="KW-0408">Iron</keyword>
<keyword id="KW-0411">Iron-sulfur</keyword>
<keyword id="KW-0472">Membrane</keyword>
<keyword id="KW-0479">Metal-binding</keyword>
<keyword id="KW-0520">NAD</keyword>
<keyword id="KW-0874">Quinone</keyword>
<keyword id="KW-1185">Reference proteome</keyword>
<keyword id="KW-1278">Translocase</keyword>
<keyword id="KW-0813">Transport</keyword>
<keyword id="KW-0830">Ubiquinone</keyword>
<sequence length="171" mass="19330">MSENTFSDTTSIYNQNLSNQGFILANLENLVSWARTRSLWPMTFGLACCAIEMMQTAGSRYDMDRYGMLFRPSPRQADVMIVAGTLTNKMAPALRRVYDQMTEPKWVISMGSCANGGGYYHYSYSVVRGCDKIVPVDIYVPGCPPTPEALLYGILQLQKKINRTQQVKFKR</sequence>